<reference key="1">
    <citation type="journal article" date="2006" name="DNA Res.">
        <title>Genome sequence of the cat pathogen, Chlamydophila felis.</title>
        <authorList>
            <person name="Azuma Y."/>
            <person name="Hirakawa H."/>
            <person name="Yamashita A."/>
            <person name="Cai Y."/>
            <person name="Rahman M.A."/>
            <person name="Suzuki H."/>
            <person name="Mitaku S."/>
            <person name="Toh H."/>
            <person name="Goto S."/>
            <person name="Murakami T."/>
            <person name="Sugi K."/>
            <person name="Hayashi H."/>
            <person name="Fukushi H."/>
            <person name="Hattori M."/>
            <person name="Kuhara S."/>
            <person name="Shirai M."/>
        </authorList>
    </citation>
    <scope>NUCLEOTIDE SEQUENCE [LARGE SCALE GENOMIC DNA]</scope>
    <source>
        <strain>Fe/C-56</strain>
    </source>
</reference>
<proteinExistence type="inferred from homology"/>
<gene>
    <name evidence="1" type="primary">ruvC</name>
    <name type="ordered locus">CF0887</name>
</gene>
<organism>
    <name type="scientific">Chlamydia felis (strain Fe/C-56)</name>
    <name type="common">Chlamydophila felis</name>
    <dbReference type="NCBI Taxonomy" id="264202"/>
    <lineage>
        <taxon>Bacteria</taxon>
        <taxon>Pseudomonadati</taxon>
        <taxon>Chlamydiota</taxon>
        <taxon>Chlamydiia</taxon>
        <taxon>Chlamydiales</taxon>
        <taxon>Chlamydiaceae</taxon>
        <taxon>Chlamydia/Chlamydophila group</taxon>
        <taxon>Chlamydia</taxon>
    </lineage>
</organism>
<evidence type="ECO:0000255" key="1">
    <source>
        <dbReference type="HAMAP-Rule" id="MF_00034"/>
    </source>
</evidence>
<sequence length="168" mass="18403">MTQLIMGIDPGTLVSGYAIILVEQRYKIRAHSYGAIRLSSKDSLTQRYKQLFQTISGVLNDITPDAVVLETQYVHKNPQSTIKLGMARGVLVLAAALRDIPVFEYAPNVAKRAVVGRGNASKQQVQLMVSKMLNIPDVLNANCEDIADAFALAICHAHTSSYDFLGVR</sequence>
<keyword id="KW-0963">Cytoplasm</keyword>
<keyword id="KW-0227">DNA damage</keyword>
<keyword id="KW-0233">DNA recombination</keyword>
<keyword id="KW-0234">DNA repair</keyword>
<keyword id="KW-0238">DNA-binding</keyword>
<keyword id="KW-0255">Endonuclease</keyword>
<keyword id="KW-0378">Hydrolase</keyword>
<keyword id="KW-0460">Magnesium</keyword>
<keyword id="KW-0479">Metal-binding</keyword>
<keyword id="KW-0540">Nuclease</keyword>
<comment type="function">
    <text evidence="1">The RuvA-RuvB-RuvC complex processes Holliday junction (HJ) DNA during genetic recombination and DNA repair. Endonuclease that resolves HJ intermediates. Cleaves cruciform DNA by making single-stranded nicks across the HJ at symmetrical positions within the homologous arms, yielding a 5'-phosphate and a 3'-hydroxyl group; requires a central core of homology in the junction. The consensus cleavage sequence is 5'-(A/T)TT(C/G)-3'. Cleavage occurs on the 3'-side of the TT dinucleotide at the point of strand exchange. HJ branch migration catalyzed by RuvA-RuvB allows RuvC to scan DNA until it finds its consensus sequence, where it cleaves and resolves the cruciform DNA.</text>
</comment>
<comment type="catalytic activity">
    <reaction evidence="1">
        <text>Endonucleolytic cleavage at a junction such as a reciprocal single-stranded crossover between two homologous DNA duplexes (Holliday junction).</text>
        <dbReference type="EC" id="3.1.21.10"/>
    </reaction>
</comment>
<comment type="cofactor">
    <cofactor evidence="1">
        <name>Mg(2+)</name>
        <dbReference type="ChEBI" id="CHEBI:18420"/>
    </cofactor>
    <text evidence="1">Binds 2 Mg(2+) ion per subunit.</text>
</comment>
<comment type="subunit">
    <text evidence="1">Homodimer which binds Holliday junction (HJ) DNA. The HJ becomes 2-fold symmetrical on binding to RuvC with unstacked arms; it has a different conformation from HJ DNA in complex with RuvA. In the full resolvosome a probable DNA-RuvA(4)-RuvB(12)-RuvC(2) complex forms which resolves the HJ.</text>
</comment>
<comment type="subcellular location">
    <subcellularLocation>
        <location evidence="1">Cytoplasm</location>
    </subcellularLocation>
</comment>
<comment type="similarity">
    <text evidence="1">Belongs to the RuvC family.</text>
</comment>
<protein>
    <recommendedName>
        <fullName evidence="1">Crossover junction endodeoxyribonuclease RuvC</fullName>
        <ecNumber evidence="1">3.1.21.10</ecNumber>
    </recommendedName>
    <alternativeName>
        <fullName evidence="1">Holliday junction nuclease RuvC</fullName>
    </alternativeName>
    <alternativeName>
        <fullName evidence="1">Holliday junction resolvase RuvC</fullName>
    </alternativeName>
</protein>
<accession>Q252X9</accession>
<name>RUVC_CHLFF</name>
<feature type="chain" id="PRO_1000002742" description="Crossover junction endodeoxyribonuclease RuvC">
    <location>
        <begin position="1"/>
        <end position="168"/>
    </location>
</feature>
<feature type="active site" evidence="1">
    <location>
        <position position="9"/>
    </location>
</feature>
<feature type="active site" evidence="1">
    <location>
        <position position="70"/>
    </location>
</feature>
<feature type="active site" evidence="1">
    <location>
        <position position="145"/>
    </location>
</feature>
<feature type="binding site" evidence="1">
    <location>
        <position position="9"/>
    </location>
    <ligand>
        <name>Mg(2+)</name>
        <dbReference type="ChEBI" id="CHEBI:18420"/>
        <label>1</label>
    </ligand>
</feature>
<feature type="binding site" evidence="1">
    <location>
        <position position="70"/>
    </location>
    <ligand>
        <name>Mg(2+)</name>
        <dbReference type="ChEBI" id="CHEBI:18420"/>
        <label>2</label>
    </ligand>
</feature>
<feature type="binding site" evidence="1">
    <location>
        <position position="145"/>
    </location>
    <ligand>
        <name>Mg(2+)</name>
        <dbReference type="ChEBI" id="CHEBI:18420"/>
        <label>1</label>
    </ligand>
</feature>
<dbReference type="EC" id="3.1.21.10" evidence="1"/>
<dbReference type="EMBL" id="AP006861">
    <property type="protein sequence ID" value="BAE81659.1"/>
    <property type="molecule type" value="Genomic_DNA"/>
</dbReference>
<dbReference type="RefSeq" id="WP_011458434.1">
    <property type="nucleotide sequence ID" value="NC_007899.1"/>
</dbReference>
<dbReference type="SMR" id="Q252X9"/>
<dbReference type="STRING" id="264202.CF0887"/>
<dbReference type="KEGG" id="cfe:CF0887"/>
<dbReference type="eggNOG" id="COG0817">
    <property type="taxonomic scope" value="Bacteria"/>
</dbReference>
<dbReference type="HOGENOM" id="CLU_091257_3_0_0"/>
<dbReference type="OrthoDB" id="9805499at2"/>
<dbReference type="Proteomes" id="UP000001260">
    <property type="component" value="Chromosome"/>
</dbReference>
<dbReference type="GO" id="GO:0005737">
    <property type="term" value="C:cytoplasm"/>
    <property type="evidence" value="ECO:0007669"/>
    <property type="project" value="UniProtKB-SubCell"/>
</dbReference>
<dbReference type="GO" id="GO:0048476">
    <property type="term" value="C:Holliday junction resolvase complex"/>
    <property type="evidence" value="ECO:0007669"/>
    <property type="project" value="UniProtKB-UniRule"/>
</dbReference>
<dbReference type="GO" id="GO:0008821">
    <property type="term" value="F:crossover junction DNA endonuclease activity"/>
    <property type="evidence" value="ECO:0007669"/>
    <property type="project" value="UniProtKB-UniRule"/>
</dbReference>
<dbReference type="GO" id="GO:0003677">
    <property type="term" value="F:DNA binding"/>
    <property type="evidence" value="ECO:0007669"/>
    <property type="project" value="UniProtKB-KW"/>
</dbReference>
<dbReference type="GO" id="GO:0000287">
    <property type="term" value="F:magnesium ion binding"/>
    <property type="evidence" value="ECO:0007669"/>
    <property type="project" value="UniProtKB-UniRule"/>
</dbReference>
<dbReference type="GO" id="GO:0006310">
    <property type="term" value="P:DNA recombination"/>
    <property type="evidence" value="ECO:0007669"/>
    <property type="project" value="UniProtKB-UniRule"/>
</dbReference>
<dbReference type="GO" id="GO:0006281">
    <property type="term" value="P:DNA repair"/>
    <property type="evidence" value="ECO:0007669"/>
    <property type="project" value="UniProtKB-UniRule"/>
</dbReference>
<dbReference type="CDD" id="cd16962">
    <property type="entry name" value="RuvC"/>
    <property type="match status" value="1"/>
</dbReference>
<dbReference type="FunFam" id="3.30.420.10:FF:000002">
    <property type="entry name" value="Crossover junction endodeoxyribonuclease RuvC"/>
    <property type="match status" value="1"/>
</dbReference>
<dbReference type="Gene3D" id="3.30.420.10">
    <property type="entry name" value="Ribonuclease H-like superfamily/Ribonuclease H"/>
    <property type="match status" value="1"/>
</dbReference>
<dbReference type="HAMAP" id="MF_00034">
    <property type="entry name" value="RuvC"/>
    <property type="match status" value="1"/>
</dbReference>
<dbReference type="InterPro" id="IPR012337">
    <property type="entry name" value="RNaseH-like_sf"/>
</dbReference>
<dbReference type="InterPro" id="IPR036397">
    <property type="entry name" value="RNaseH_sf"/>
</dbReference>
<dbReference type="InterPro" id="IPR020563">
    <property type="entry name" value="X-over_junc_endoDNase_Mg_BS"/>
</dbReference>
<dbReference type="InterPro" id="IPR002176">
    <property type="entry name" value="X-over_junc_endoDNase_RuvC"/>
</dbReference>
<dbReference type="NCBIfam" id="TIGR00228">
    <property type="entry name" value="ruvC"/>
    <property type="match status" value="1"/>
</dbReference>
<dbReference type="PANTHER" id="PTHR30194">
    <property type="entry name" value="CROSSOVER JUNCTION ENDODEOXYRIBONUCLEASE RUVC"/>
    <property type="match status" value="1"/>
</dbReference>
<dbReference type="PANTHER" id="PTHR30194:SF3">
    <property type="entry name" value="CROSSOVER JUNCTION ENDODEOXYRIBONUCLEASE RUVC"/>
    <property type="match status" value="1"/>
</dbReference>
<dbReference type="Pfam" id="PF02075">
    <property type="entry name" value="RuvC"/>
    <property type="match status" value="1"/>
</dbReference>
<dbReference type="PRINTS" id="PR00696">
    <property type="entry name" value="RSOLVASERUVC"/>
</dbReference>
<dbReference type="SUPFAM" id="SSF53098">
    <property type="entry name" value="Ribonuclease H-like"/>
    <property type="match status" value="1"/>
</dbReference>
<dbReference type="PROSITE" id="PS01321">
    <property type="entry name" value="RUVC"/>
    <property type="match status" value="1"/>
</dbReference>